<feature type="initiator methionine" description="Removed" evidence="1">
    <location>
        <position position="1"/>
    </location>
</feature>
<feature type="chain" id="PRO_0000174581" description="S-adenosylmethionine synthase">
    <location>
        <begin position="2"/>
        <end position="384"/>
    </location>
</feature>
<feature type="region of interest" description="Flexible loop" evidence="2">
    <location>
        <begin position="99"/>
        <end position="109"/>
    </location>
</feature>
<feature type="binding site" description="in other chain" evidence="2">
    <location>
        <position position="15"/>
    </location>
    <ligand>
        <name>ATP</name>
        <dbReference type="ChEBI" id="CHEBI:30616"/>
        <note>ligand shared between two neighboring subunits</note>
    </ligand>
</feature>
<feature type="binding site" evidence="2">
    <location>
        <position position="17"/>
    </location>
    <ligand>
        <name>Mg(2+)</name>
        <dbReference type="ChEBI" id="CHEBI:18420"/>
    </ligand>
</feature>
<feature type="binding site" evidence="2">
    <location>
        <position position="43"/>
    </location>
    <ligand>
        <name>K(+)</name>
        <dbReference type="ChEBI" id="CHEBI:29103"/>
    </ligand>
</feature>
<feature type="binding site" description="in other chain" evidence="2">
    <location>
        <position position="56"/>
    </location>
    <ligand>
        <name>L-methionine</name>
        <dbReference type="ChEBI" id="CHEBI:57844"/>
        <note>ligand shared between two neighboring subunits</note>
    </ligand>
</feature>
<feature type="binding site" description="in other chain" evidence="2">
    <location>
        <position position="99"/>
    </location>
    <ligand>
        <name>L-methionine</name>
        <dbReference type="ChEBI" id="CHEBI:57844"/>
        <note>ligand shared between two neighboring subunits</note>
    </ligand>
</feature>
<feature type="binding site" description="in other chain" evidence="2">
    <location>
        <begin position="164"/>
        <end position="166"/>
    </location>
    <ligand>
        <name>ATP</name>
        <dbReference type="ChEBI" id="CHEBI:30616"/>
        <note>ligand shared between two neighboring subunits</note>
    </ligand>
</feature>
<feature type="binding site" description="in other chain" evidence="2">
    <location>
        <begin position="230"/>
        <end position="231"/>
    </location>
    <ligand>
        <name>ATP</name>
        <dbReference type="ChEBI" id="CHEBI:30616"/>
        <note>ligand shared between two neighboring subunits</note>
    </ligand>
</feature>
<feature type="binding site" evidence="2">
    <location>
        <position position="239"/>
    </location>
    <ligand>
        <name>ATP</name>
        <dbReference type="ChEBI" id="CHEBI:30616"/>
        <note>ligand shared between two neighboring subunits</note>
    </ligand>
</feature>
<feature type="binding site" evidence="2">
    <location>
        <position position="239"/>
    </location>
    <ligand>
        <name>L-methionine</name>
        <dbReference type="ChEBI" id="CHEBI:57844"/>
        <note>ligand shared between two neighboring subunits</note>
    </ligand>
</feature>
<feature type="binding site" description="in other chain" evidence="2">
    <location>
        <begin position="245"/>
        <end position="246"/>
    </location>
    <ligand>
        <name>ATP</name>
        <dbReference type="ChEBI" id="CHEBI:30616"/>
        <note>ligand shared between two neighboring subunits</note>
    </ligand>
</feature>
<feature type="binding site" evidence="2">
    <location>
        <position position="262"/>
    </location>
    <ligand>
        <name>ATP</name>
        <dbReference type="ChEBI" id="CHEBI:30616"/>
        <note>ligand shared between two neighboring subunits</note>
    </ligand>
</feature>
<feature type="binding site" evidence="2">
    <location>
        <position position="266"/>
    </location>
    <ligand>
        <name>ATP</name>
        <dbReference type="ChEBI" id="CHEBI:30616"/>
        <note>ligand shared between two neighboring subunits</note>
    </ligand>
</feature>
<feature type="binding site" description="in other chain" evidence="2">
    <location>
        <position position="270"/>
    </location>
    <ligand>
        <name>L-methionine</name>
        <dbReference type="ChEBI" id="CHEBI:57844"/>
        <note>ligand shared between two neighboring subunits</note>
    </ligand>
</feature>
<accession>P66765</accession>
<accession>Q8XF85</accession>
<reference key="1">
    <citation type="journal article" date="2001" name="Nature">
        <title>Complete genome sequence of a multiple drug resistant Salmonella enterica serovar Typhi CT18.</title>
        <authorList>
            <person name="Parkhill J."/>
            <person name="Dougan G."/>
            <person name="James K.D."/>
            <person name="Thomson N.R."/>
            <person name="Pickard D."/>
            <person name="Wain J."/>
            <person name="Churcher C.M."/>
            <person name="Mungall K.L."/>
            <person name="Bentley S.D."/>
            <person name="Holden M.T.G."/>
            <person name="Sebaihia M."/>
            <person name="Baker S."/>
            <person name="Basham D."/>
            <person name="Brooks K."/>
            <person name="Chillingworth T."/>
            <person name="Connerton P."/>
            <person name="Cronin A."/>
            <person name="Davis P."/>
            <person name="Davies R.M."/>
            <person name="Dowd L."/>
            <person name="White N."/>
            <person name="Farrar J."/>
            <person name="Feltwell T."/>
            <person name="Hamlin N."/>
            <person name="Haque A."/>
            <person name="Hien T.T."/>
            <person name="Holroyd S."/>
            <person name="Jagels K."/>
            <person name="Krogh A."/>
            <person name="Larsen T.S."/>
            <person name="Leather S."/>
            <person name="Moule S."/>
            <person name="O'Gaora P."/>
            <person name="Parry C."/>
            <person name="Quail M.A."/>
            <person name="Rutherford K.M."/>
            <person name="Simmonds M."/>
            <person name="Skelton J."/>
            <person name="Stevens K."/>
            <person name="Whitehead S."/>
            <person name="Barrell B.G."/>
        </authorList>
    </citation>
    <scope>NUCLEOTIDE SEQUENCE [LARGE SCALE GENOMIC DNA]</scope>
    <source>
        <strain>CT18</strain>
    </source>
</reference>
<reference key="2">
    <citation type="journal article" date="2003" name="J. Bacteriol.">
        <title>Comparative genomics of Salmonella enterica serovar Typhi strains Ty2 and CT18.</title>
        <authorList>
            <person name="Deng W."/>
            <person name="Liou S.-R."/>
            <person name="Plunkett G. III"/>
            <person name="Mayhew G.F."/>
            <person name="Rose D.J."/>
            <person name="Burland V."/>
            <person name="Kodoyianni V."/>
            <person name="Schwartz D.C."/>
            <person name="Blattner F.R."/>
        </authorList>
    </citation>
    <scope>NUCLEOTIDE SEQUENCE [LARGE SCALE GENOMIC DNA]</scope>
    <source>
        <strain>ATCC 700931 / Ty2</strain>
    </source>
</reference>
<proteinExistence type="inferred from homology"/>
<comment type="function">
    <text evidence="2">Catalyzes the formation of S-adenosylmethionine (AdoMet) from methionine and ATP. The overall synthetic reaction is composed of two sequential steps, AdoMet formation and the subsequent tripolyphosphate hydrolysis which occurs prior to release of AdoMet from the enzyme.</text>
</comment>
<comment type="catalytic activity">
    <reaction evidence="2">
        <text>L-methionine + ATP + H2O = S-adenosyl-L-methionine + phosphate + diphosphate</text>
        <dbReference type="Rhea" id="RHEA:21080"/>
        <dbReference type="ChEBI" id="CHEBI:15377"/>
        <dbReference type="ChEBI" id="CHEBI:30616"/>
        <dbReference type="ChEBI" id="CHEBI:33019"/>
        <dbReference type="ChEBI" id="CHEBI:43474"/>
        <dbReference type="ChEBI" id="CHEBI:57844"/>
        <dbReference type="ChEBI" id="CHEBI:59789"/>
        <dbReference type="EC" id="2.5.1.6"/>
    </reaction>
</comment>
<comment type="cofactor">
    <cofactor evidence="2">
        <name>Mg(2+)</name>
        <dbReference type="ChEBI" id="CHEBI:18420"/>
    </cofactor>
    <text evidence="2">Binds 2 divalent ions per subunit.</text>
</comment>
<comment type="cofactor">
    <cofactor evidence="2">
        <name>K(+)</name>
        <dbReference type="ChEBI" id="CHEBI:29103"/>
    </cofactor>
    <text evidence="2">Binds 1 potassium ion per subunit.</text>
</comment>
<comment type="pathway">
    <text evidence="2">Amino-acid biosynthesis; S-adenosyl-L-methionine biosynthesis; S-adenosyl-L-methionine from L-methionine: step 1/1.</text>
</comment>
<comment type="subunit">
    <text evidence="2">Homotetramer; dimer of dimers.</text>
</comment>
<comment type="subcellular location">
    <subcellularLocation>
        <location evidence="2">Cytoplasm</location>
    </subcellularLocation>
</comment>
<comment type="similarity">
    <text evidence="2">Belongs to the AdoMet synthase family.</text>
</comment>
<gene>
    <name evidence="2" type="primary">metK</name>
    <name type="ordered locus">STY3243</name>
    <name type="ordered locus">t3002</name>
</gene>
<name>METK_SALTI</name>
<evidence type="ECO:0000250" key="1"/>
<evidence type="ECO:0000255" key="2">
    <source>
        <dbReference type="HAMAP-Rule" id="MF_00086"/>
    </source>
</evidence>
<sequence>MAKHLFTSESVSEGHPDKIADQISDAVLDAILQQDPKARVACETYVKTGMVLVGGEITTSAWVDIEEITRNTVREIGYVHSDMGFDANSCAVLSAIGKQSPDINQGVDRADPLEQGAGDQGLMFGYATNETDVLMPAPITYAHRLVQRQAEVRKNGTLPWLRPDAKSQVTFQYDDGKIVGIDAVVLSTQHAEDIDQKSLQEAVMEEIIKPILPSEWLNTSTKFFINPTGRFVIGGPMGDCGLTGRKIIVDTYGGMARHGGGAFSGKDPSKVDRSAAYAARYVAKNIVAAGLADRCEIQVSYAIGVAEPTSIMVETFGTEKVPAEQLILLVREFFDLRPYGLIQMLDLLHPIYKETAAYGHFGRENFPWEKTDKAQLLRDAAGLK</sequence>
<protein>
    <recommendedName>
        <fullName evidence="2">S-adenosylmethionine synthase</fullName>
        <shortName evidence="2">AdoMet synthase</shortName>
        <ecNumber evidence="2">2.5.1.6</ecNumber>
    </recommendedName>
    <alternativeName>
        <fullName evidence="2">MAT</fullName>
    </alternativeName>
    <alternativeName>
        <fullName evidence="2">Methionine adenosyltransferase</fullName>
    </alternativeName>
</protein>
<keyword id="KW-0067">ATP-binding</keyword>
<keyword id="KW-0963">Cytoplasm</keyword>
<keyword id="KW-0460">Magnesium</keyword>
<keyword id="KW-0479">Metal-binding</keyword>
<keyword id="KW-0547">Nucleotide-binding</keyword>
<keyword id="KW-0554">One-carbon metabolism</keyword>
<keyword id="KW-0630">Potassium</keyword>
<keyword id="KW-0808">Transferase</keyword>
<dbReference type="EC" id="2.5.1.6" evidence="2"/>
<dbReference type="EMBL" id="AL513382">
    <property type="protein sequence ID" value="CAD02914.1"/>
    <property type="molecule type" value="Genomic_DNA"/>
</dbReference>
<dbReference type="EMBL" id="AE014613">
    <property type="protein sequence ID" value="AAO70554.1"/>
    <property type="molecule type" value="Genomic_DNA"/>
</dbReference>
<dbReference type="RefSeq" id="NP_457482.1">
    <property type="nucleotide sequence ID" value="NC_003198.1"/>
</dbReference>
<dbReference type="RefSeq" id="WP_001062140.1">
    <property type="nucleotide sequence ID" value="NZ_WSUR01000049.1"/>
</dbReference>
<dbReference type="SMR" id="P66765"/>
<dbReference type="STRING" id="220341.gene:17587116"/>
<dbReference type="KEGG" id="stt:t3002"/>
<dbReference type="KEGG" id="sty:STY3243"/>
<dbReference type="PATRIC" id="fig|220341.7.peg.3306"/>
<dbReference type="eggNOG" id="COG0192">
    <property type="taxonomic scope" value="Bacteria"/>
</dbReference>
<dbReference type="HOGENOM" id="CLU_041802_1_1_6"/>
<dbReference type="OMA" id="ASYMARY"/>
<dbReference type="OrthoDB" id="9801686at2"/>
<dbReference type="UniPathway" id="UPA00315">
    <property type="reaction ID" value="UER00080"/>
</dbReference>
<dbReference type="Proteomes" id="UP000000541">
    <property type="component" value="Chromosome"/>
</dbReference>
<dbReference type="Proteomes" id="UP000002670">
    <property type="component" value="Chromosome"/>
</dbReference>
<dbReference type="GO" id="GO:0005737">
    <property type="term" value="C:cytoplasm"/>
    <property type="evidence" value="ECO:0007669"/>
    <property type="project" value="UniProtKB-SubCell"/>
</dbReference>
<dbReference type="GO" id="GO:0005524">
    <property type="term" value="F:ATP binding"/>
    <property type="evidence" value="ECO:0007669"/>
    <property type="project" value="UniProtKB-UniRule"/>
</dbReference>
<dbReference type="GO" id="GO:0000287">
    <property type="term" value="F:magnesium ion binding"/>
    <property type="evidence" value="ECO:0007669"/>
    <property type="project" value="UniProtKB-UniRule"/>
</dbReference>
<dbReference type="GO" id="GO:0004478">
    <property type="term" value="F:methionine adenosyltransferase activity"/>
    <property type="evidence" value="ECO:0007669"/>
    <property type="project" value="UniProtKB-UniRule"/>
</dbReference>
<dbReference type="GO" id="GO:0006730">
    <property type="term" value="P:one-carbon metabolic process"/>
    <property type="evidence" value="ECO:0007669"/>
    <property type="project" value="UniProtKB-KW"/>
</dbReference>
<dbReference type="GO" id="GO:0006556">
    <property type="term" value="P:S-adenosylmethionine biosynthetic process"/>
    <property type="evidence" value="ECO:0007669"/>
    <property type="project" value="UniProtKB-UniRule"/>
</dbReference>
<dbReference type="CDD" id="cd18079">
    <property type="entry name" value="S-AdoMet_synt"/>
    <property type="match status" value="1"/>
</dbReference>
<dbReference type="FunFam" id="3.30.300.10:FF:000001">
    <property type="entry name" value="S-adenosylmethionine synthase"/>
    <property type="match status" value="1"/>
</dbReference>
<dbReference type="FunFam" id="3.30.300.10:FF:000003">
    <property type="entry name" value="S-adenosylmethionine synthase"/>
    <property type="match status" value="1"/>
</dbReference>
<dbReference type="Gene3D" id="3.30.300.10">
    <property type="match status" value="3"/>
</dbReference>
<dbReference type="HAMAP" id="MF_00086">
    <property type="entry name" value="S_AdoMet_synth1"/>
    <property type="match status" value="1"/>
</dbReference>
<dbReference type="InterPro" id="IPR022631">
    <property type="entry name" value="ADOMET_SYNTHASE_CS"/>
</dbReference>
<dbReference type="InterPro" id="IPR022630">
    <property type="entry name" value="S-AdoMet_synt_C"/>
</dbReference>
<dbReference type="InterPro" id="IPR022629">
    <property type="entry name" value="S-AdoMet_synt_central"/>
</dbReference>
<dbReference type="InterPro" id="IPR022628">
    <property type="entry name" value="S-AdoMet_synt_N"/>
</dbReference>
<dbReference type="InterPro" id="IPR002133">
    <property type="entry name" value="S-AdoMet_synthetase"/>
</dbReference>
<dbReference type="InterPro" id="IPR022636">
    <property type="entry name" value="S-AdoMet_synthetase_sfam"/>
</dbReference>
<dbReference type="NCBIfam" id="TIGR01034">
    <property type="entry name" value="metK"/>
    <property type="match status" value="1"/>
</dbReference>
<dbReference type="PANTHER" id="PTHR11964">
    <property type="entry name" value="S-ADENOSYLMETHIONINE SYNTHETASE"/>
    <property type="match status" value="1"/>
</dbReference>
<dbReference type="Pfam" id="PF02773">
    <property type="entry name" value="S-AdoMet_synt_C"/>
    <property type="match status" value="1"/>
</dbReference>
<dbReference type="Pfam" id="PF02772">
    <property type="entry name" value="S-AdoMet_synt_M"/>
    <property type="match status" value="1"/>
</dbReference>
<dbReference type="Pfam" id="PF00438">
    <property type="entry name" value="S-AdoMet_synt_N"/>
    <property type="match status" value="1"/>
</dbReference>
<dbReference type="PIRSF" id="PIRSF000497">
    <property type="entry name" value="MAT"/>
    <property type="match status" value="1"/>
</dbReference>
<dbReference type="SUPFAM" id="SSF55973">
    <property type="entry name" value="S-adenosylmethionine synthetase"/>
    <property type="match status" value="3"/>
</dbReference>
<dbReference type="PROSITE" id="PS00376">
    <property type="entry name" value="ADOMET_SYNTHASE_1"/>
    <property type="match status" value="1"/>
</dbReference>
<dbReference type="PROSITE" id="PS00377">
    <property type="entry name" value="ADOMET_SYNTHASE_2"/>
    <property type="match status" value="1"/>
</dbReference>
<organism>
    <name type="scientific">Salmonella typhi</name>
    <dbReference type="NCBI Taxonomy" id="90370"/>
    <lineage>
        <taxon>Bacteria</taxon>
        <taxon>Pseudomonadati</taxon>
        <taxon>Pseudomonadota</taxon>
        <taxon>Gammaproteobacteria</taxon>
        <taxon>Enterobacterales</taxon>
        <taxon>Enterobacteriaceae</taxon>
        <taxon>Salmonella</taxon>
    </lineage>
</organism>